<organism>
    <name type="scientific">Salmonella paratyphi A (strain AKU_12601)</name>
    <dbReference type="NCBI Taxonomy" id="554290"/>
    <lineage>
        <taxon>Bacteria</taxon>
        <taxon>Pseudomonadati</taxon>
        <taxon>Pseudomonadota</taxon>
        <taxon>Gammaproteobacteria</taxon>
        <taxon>Enterobacterales</taxon>
        <taxon>Enterobacteriaceae</taxon>
        <taxon>Salmonella</taxon>
    </lineage>
</organism>
<evidence type="ECO:0000255" key="1">
    <source>
        <dbReference type="HAMAP-Rule" id="MF_00093"/>
    </source>
</evidence>
<evidence type="ECO:0000256" key="2">
    <source>
        <dbReference type="SAM" id="MobiDB-lite"/>
    </source>
</evidence>
<comment type="function">
    <text evidence="1">Peptide chain release factor 1 directs the termination of translation in response to the peptide chain termination codons UAG and UAA.</text>
</comment>
<comment type="subcellular location">
    <subcellularLocation>
        <location evidence="1">Cytoplasm</location>
    </subcellularLocation>
</comment>
<comment type="PTM">
    <text evidence="1">Methylated by PrmC. Methylation increases the termination efficiency of RF1.</text>
</comment>
<comment type="similarity">
    <text evidence="1">Belongs to the prokaryotic/mitochondrial release factor family.</text>
</comment>
<reference key="1">
    <citation type="journal article" date="2009" name="BMC Genomics">
        <title>Pseudogene accumulation in the evolutionary histories of Salmonella enterica serovars Paratyphi A and Typhi.</title>
        <authorList>
            <person name="Holt K.E."/>
            <person name="Thomson N.R."/>
            <person name="Wain J."/>
            <person name="Langridge G.C."/>
            <person name="Hasan R."/>
            <person name="Bhutta Z.A."/>
            <person name="Quail M.A."/>
            <person name="Norbertczak H."/>
            <person name="Walker D."/>
            <person name="Simmonds M."/>
            <person name="White B."/>
            <person name="Bason N."/>
            <person name="Mungall K."/>
            <person name="Dougan G."/>
            <person name="Parkhill J."/>
        </authorList>
    </citation>
    <scope>NUCLEOTIDE SEQUENCE [LARGE SCALE GENOMIC DNA]</scope>
    <source>
        <strain>AKU_12601</strain>
    </source>
</reference>
<sequence length="360" mass="40477">MKPSIVAKLEALHERHEEVQALLGDAGIIADQDRFRALSREYAQLSDVSRCFTDWQQVQDDIETAQMMLDDPEMREMAQEELREAKEKSEQLEQQLQVLLLPKDPDDERNAFLEVRAGTGGDEAALFAGDLFRMYSRYAEARRWRVEIMSMSEGEHGGYKEIIAKISGDGVYGRLKFESGGHRVQRVPATESQGRIHTSACTVAVMPELPEAELPDINPADLRIDTFRSSGAGGQHVNTTDSSIRITHLPTGIVVECQDERSQHKNKAKALSVLGARIHAAETAKRQQAEASTRRNLLGSGDRSDRNRTYNFPQGRVTDHRINLTLYRLDETMEGKLDMLIEPIVQEHQADLLAALSEQE</sequence>
<gene>
    <name evidence="1" type="primary">prfA</name>
    <name type="ordered locus">SSPA1024</name>
</gene>
<accession>B5BI75</accession>
<feature type="chain" id="PRO_1000093502" description="Peptide chain release factor 1">
    <location>
        <begin position="1"/>
        <end position="360"/>
    </location>
</feature>
<feature type="region of interest" description="Disordered" evidence="2">
    <location>
        <begin position="285"/>
        <end position="313"/>
    </location>
</feature>
<feature type="modified residue" description="N5-methylglutamine" evidence="1">
    <location>
        <position position="235"/>
    </location>
</feature>
<protein>
    <recommendedName>
        <fullName evidence="1">Peptide chain release factor 1</fullName>
        <shortName evidence="1">RF-1</shortName>
    </recommendedName>
</protein>
<dbReference type="EMBL" id="FM200053">
    <property type="protein sequence ID" value="CAR59177.1"/>
    <property type="molecule type" value="Genomic_DNA"/>
</dbReference>
<dbReference type="RefSeq" id="WP_000804704.1">
    <property type="nucleotide sequence ID" value="NC_011147.1"/>
</dbReference>
<dbReference type="SMR" id="B5BI75"/>
<dbReference type="KEGG" id="sek:SSPA1024"/>
<dbReference type="HOGENOM" id="CLU_036856_0_1_6"/>
<dbReference type="Proteomes" id="UP000001869">
    <property type="component" value="Chromosome"/>
</dbReference>
<dbReference type="GO" id="GO:0005737">
    <property type="term" value="C:cytoplasm"/>
    <property type="evidence" value="ECO:0007669"/>
    <property type="project" value="UniProtKB-SubCell"/>
</dbReference>
<dbReference type="GO" id="GO:0016149">
    <property type="term" value="F:translation release factor activity, codon specific"/>
    <property type="evidence" value="ECO:0007669"/>
    <property type="project" value="UniProtKB-UniRule"/>
</dbReference>
<dbReference type="FunFam" id="3.30.160.20:FF:000004">
    <property type="entry name" value="Peptide chain release factor 1"/>
    <property type="match status" value="1"/>
</dbReference>
<dbReference type="FunFam" id="3.30.70.1660:FF:000002">
    <property type="entry name" value="Peptide chain release factor 1"/>
    <property type="match status" value="1"/>
</dbReference>
<dbReference type="FunFam" id="3.30.70.1660:FF:000004">
    <property type="entry name" value="Peptide chain release factor 1"/>
    <property type="match status" value="1"/>
</dbReference>
<dbReference type="Gene3D" id="3.30.160.20">
    <property type="match status" value="1"/>
</dbReference>
<dbReference type="Gene3D" id="3.30.70.1660">
    <property type="match status" value="1"/>
</dbReference>
<dbReference type="Gene3D" id="6.10.140.1950">
    <property type="match status" value="1"/>
</dbReference>
<dbReference type="HAMAP" id="MF_00093">
    <property type="entry name" value="Rel_fac_1"/>
    <property type="match status" value="1"/>
</dbReference>
<dbReference type="InterPro" id="IPR005139">
    <property type="entry name" value="PCRF"/>
</dbReference>
<dbReference type="InterPro" id="IPR000352">
    <property type="entry name" value="Pep_chain_release_fac_I"/>
</dbReference>
<dbReference type="InterPro" id="IPR045853">
    <property type="entry name" value="Pep_chain_release_fac_I_sf"/>
</dbReference>
<dbReference type="InterPro" id="IPR050057">
    <property type="entry name" value="Prokaryotic/Mito_RF"/>
</dbReference>
<dbReference type="InterPro" id="IPR004373">
    <property type="entry name" value="RF-1"/>
</dbReference>
<dbReference type="NCBIfam" id="TIGR00019">
    <property type="entry name" value="prfA"/>
    <property type="match status" value="1"/>
</dbReference>
<dbReference type="NCBIfam" id="NF001859">
    <property type="entry name" value="PRK00591.1"/>
    <property type="match status" value="1"/>
</dbReference>
<dbReference type="PANTHER" id="PTHR43804">
    <property type="entry name" value="LD18447P"/>
    <property type="match status" value="1"/>
</dbReference>
<dbReference type="PANTHER" id="PTHR43804:SF7">
    <property type="entry name" value="LD18447P"/>
    <property type="match status" value="1"/>
</dbReference>
<dbReference type="Pfam" id="PF03462">
    <property type="entry name" value="PCRF"/>
    <property type="match status" value="1"/>
</dbReference>
<dbReference type="Pfam" id="PF00472">
    <property type="entry name" value="RF-1"/>
    <property type="match status" value="1"/>
</dbReference>
<dbReference type="SMART" id="SM00937">
    <property type="entry name" value="PCRF"/>
    <property type="match status" value="1"/>
</dbReference>
<dbReference type="SUPFAM" id="SSF75620">
    <property type="entry name" value="Release factor"/>
    <property type="match status" value="1"/>
</dbReference>
<name>RF1_SALPK</name>
<keyword id="KW-0963">Cytoplasm</keyword>
<keyword id="KW-0488">Methylation</keyword>
<keyword id="KW-0648">Protein biosynthesis</keyword>
<proteinExistence type="inferred from homology"/>